<accession>A9VFM2</accession>
<name>KDPC_BACMK</name>
<proteinExistence type="inferred from homology"/>
<dbReference type="EMBL" id="CP000903">
    <property type="protein sequence ID" value="ABY41918.1"/>
    <property type="molecule type" value="Genomic_DNA"/>
</dbReference>
<dbReference type="RefSeq" id="WP_002125346.1">
    <property type="nucleotide sequence ID" value="NC_010184.1"/>
</dbReference>
<dbReference type="SMR" id="A9VFM2"/>
<dbReference type="GeneID" id="66264179"/>
<dbReference type="KEGG" id="bwe:BcerKBAB4_0656"/>
<dbReference type="eggNOG" id="COG2156">
    <property type="taxonomic scope" value="Bacteria"/>
</dbReference>
<dbReference type="HOGENOM" id="CLU_077094_1_0_9"/>
<dbReference type="Proteomes" id="UP000002154">
    <property type="component" value="Chromosome"/>
</dbReference>
<dbReference type="GO" id="GO:0005886">
    <property type="term" value="C:plasma membrane"/>
    <property type="evidence" value="ECO:0007669"/>
    <property type="project" value="UniProtKB-SubCell"/>
</dbReference>
<dbReference type="GO" id="GO:0005524">
    <property type="term" value="F:ATP binding"/>
    <property type="evidence" value="ECO:0007669"/>
    <property type="project" value="UniProtKB-UniRule"/>
</dbReference>
<dbReference type="GO" id="GO:0008556">
    <property type="term" value="F:P-type potassium transmembrane transporter activity"/>
    <property type="evidence" value="ECO:0007669"/>
    <property type="project" value="InterPro"/>
</dbReference>
<dbReference type="HAMAP" id="MF_00276">
    <property type="entry name" value="KdpC"/>
    <property type="match status" value="1"/>
</dbReference>
<dbReference type="InterPro" id="IPR003820">
    <property type="entry name" value="KdpC"/>
</dbReference>
<dbReference type="NCBIfam" id="TIGR00681">
    <property type="entry name" value="kdpC"/>
    <property type="match status" value="1"/>
</dbReference>
<dbReference type="NCBIfam" id="NF001454">
    <property type="entry name" value="PRK00315.1"/>
    <property type="match status" value="1"/>
</dbReference>
<dbReference type="NCBIfam" id="NF010601">
    <property type="entry name" value="PRK13997.1"/>
    <property type="match status" value="1"/>
</dbReference>
<dbReference type="PANTHER" id="PTHR30042">
    <property type="entry name" value="POTASSIUM-TRANSPORTING ATPASE C CHAIN"/>
    <property type="match status" value="1"/>
</dbReference>
<dbReference type="PANTHER" id="PTHR30042:SF2">
    <property type="entry name" value="POTASSIUM-TRANSPORTING ATPASE KDPC SUBUNIT"/>
    <property type="match status" value="1"/>
</dbReference>
<dbReference type="Pfam" id="PF02669">
    <property type="entry name" value="KdpC"/>
    <property type="match status" value="1"/>
</dbReference>
<dbReference type="PIRSF" id="PIRSF001296">
    <property type="entry name" value="K_ATPase_KdpC"/>
    <property type="match status" value="1"/>
</dbReference>
<keyword id="KW-0067">ATP-binding</keyword>
<keyword id="KW-1003">Cell membrane</keyword>
<keyword id="KW-0406">Ion transport</keyword>
<keyword id="KW-0472">Membrane</keyword>
<keyword id="KW-0547">Nucleotide-binding</keyword>
<keyword id="KW-0630">Potassium</keyword>
<keyword id="KW-0633">Potassium transport</keyword>
<keyword id="KW-0812">Transmembrane</keyword>
<keyword id="KW-1133">Transmembrane helix</keyword>
<keyword id="KW-0813">Transport</keyword>
<evidence type="ECO:0000255" key="1">
    <source>
        <dbReference type="HAMAP-Rule" id="MF_00276"/>
    </source>
</evidence>
<reference key="1">
    <citation type="journal article" date="2008" name="Chem. Biol. Interact.">
        <title>Extending the Bacillus cereus group genomics to putative food-borne pathogens of different toxicity.</title>
        <authorList>
            <person name="Lapidus A."/>
            <person name="Goltsman E."/>
            <person name="Auger S."/>
            <person name="Galleron N."/>
            <person name="Segurens B."/>
            <person name="Dossat C."/>
            <person name="Land M.L."/>
            <person name="Broussolle V."/>
            <person name="Brillard J."/>
            <person name="Guinebretiere M.-H."/>
            <person name="Sanchis V."/>
            <person name="Nguen-the C."/>
            <person name="Lereclus D."/>
            <person name="Richardson P."/>
            <person name="Wincker P."/>
            <person name="Weissenbach J."/>
            <person name="Ehrlich S.D."/>
            <person name="Sorokin A."/>
        </authorList>
    </citation>
    <scope>NUCLEOTIDE SEQUENCE [LARGE SCALE GENOMIC DNA]</scope>
    <source>
        <strain>KBAB4</strain>
    </source>
</reference>
<organism>
    <name type="scientific">Bacillus mycoides (strain KBAB4)</name>
    <name type="common">Bacillus weihenstephanensis</name>
    <dbReference type="NCBI Taxonomy" id="315730"/>
    <lineage>
        <taxon>Bacteria</taxon>
        <taxon>Bacillati</taxon>
        <taxon>Bacillota</taxon>
        <taxon>Bacilli</taxon>
        <taxon>Bacillales</taxon>
        <taxon>Bacillaceae</taxon>
        <taxon>Bacillus</taxon>
        <taxon>Bacillus cereus group</taxon>
    </lineage>
</organism>
<feature type="chain" id="PRO_1000114711" description="Potassium-transporting ATPase KdpC subunit">
    <location>
        <begin position="1"/>
        <end position="193"/>
    </location>
</feature>
<feature type="transmembrane region" description="Helical" evidence="1">
    <location>
        <begin position="14"/>
        <end position="34"/>
    </location>
</feature>
<comment type="function">
    <text evidence="1">Part of the high-affinity ATP-driven potassium transport (or Kdp) system, which catalyzes the hydrolysis of ATP coupled with the electrogenic transport of potassium into the cytoplasm. This subunit acts as a catalytic chaperone that increases the ATP-binding affinity of the ATP-hydrolyzing subunit KdpB by the formation of a transient KdpB/KdpC/ATP ternary complex.</text>
</comment>
<comment type="subunit">
    <text evidence="1">The system is composed of three essential subunits: KdpA, KdpB and KdpC.</text>
</comment>
<comment type="subcellular location">
    <subcellularLocation>
        <location evidence="1">Cell membrane</location>
        <topology evidence="1">Single-pass membrane protein</topology>
    </subcellularLocation>
</comment>
<comment type="similarity">
    <text evidence="1">Belongs to the KdpC family.</text>
</comment>
<sequence>MAKKQSILSPIIRITFTFLVLCGLVYPLIVTGIAQAVMKDNADGSLIYNDKDEVVGSKLIGQNFTDPRYFHGRVSSIEYKAEASGSNNYAPSNPDLAKRVEKSIDDWKKQNRAIPVTEVPIDLVTNSGSGLDPDISPKAASVQVDRISKLTNIPKEKLDQLIKDQTEGAALGLFGEDRVNVLKLNLELQKLMK</sequence>
<protein>
    <recommendedName>
        <fullName evidence="1">Potassium-transporting ATPase KdpC subunit</fullName>
    </recommendedName>
    <alternativeName>
        <fullName evidence="1">ATP phosphohydrolase [potassium-transporting] C chain</fullName>
    </alternativeName>
    <alternativeName>
        <fullName evidence="1">Potassium-binding and translocating subunit C</fullName>
    </alternativeName>
    <alternativeName>
        <fullName evidence="1">Potassium-translocating ATPase C chain</fullName>
    </alternativeName>
</protein>
<gene>
    <name evidence="1" type="primary">kdpC</name>
    <name type="ordered locus">BcerKBAB4_0656</name>
</gene>